<sequence length="681" mass="77946">MENRTDNEYQLVSPYQPAGDQPKAIEALVQGVRDGRHWQTLLGVTGSGKTFTISNVIAQLNRPVLVMSHNKTLAAQLYGELKQFFPHNAVEYFISYYDFYQPEAYLPSLDKYIAKDLRINDEIERLRLRATSALLSGRKDVIVVSSVSCIYGLGSPEEWKAQIIKLRAGMEKDRDEFLRELISLHYLRDDVQPTSGRFRVRGDTIDLVPAHEELALRIEFFGSEIESLQTFDIQTGEILGDDEYAFIYPARQFVADEEKLQVAMLAIENELAGRLNLLRSENRFVEARRLEERTRYDLEMMKELGYCSGIENYSRHISGRPAGERPICLLDYFPEDYMVVVDESHVTLPQIRGMYGGDRSRKTVLVEHGFRLPSALDNRPLRFEEYEEMVPQVICISATPGEHELMRSGGEVVELLVRPTGLLDPPVEVRPVKGQIDNLLAEIRHHISIGHKALVMTLTKRMSEDLHDFFRKAGIRCRYLHSEIKSLERMQILRELRAGDIDVLVGVNLLREGLDLPEVSLVAILDADKEGFLRNTRSLMQIAGRAARNLDGFVVLYADVITRSIQEVLDETARRRAIQQRYNEEHGITPRSIVKSVDQILDTTGVADAEERYRRRRFGLEPKPERVLSGYADNLTPEKGYAIVEGLRLEMQEAAEHMEYEKAAYLRDEITKMEQVLKKDG</sequence>
<feature type="chain" id="PRO_0000227300" description="UvrABC system protein B">
    <location>
        <begin position="1"/>
        <end position="681"/>
    </location>
</feature>
<feature type="domain" description="Helicase ATP-binding" evidence="1">
    <location>
        <begin position="30"/>
        <end position="419"/>
    </location>
</feature>
<feature type="domain" description="Helicase C-terminal" evidence="1">
    <location>
        <begin position="435"/>
        <end position="601"/>
    </location>
</feature>
<feature type="domain" description="UVR" evidence="1">
    <location>
        <begin position="641"/>
        <end position="676"/>
    </location>
</feature>
<feature type="short sequence motif" description="Beta-hairpin">
    <location>
        <begin position="96"/>
        <end position="119"/>
    </location>
</feature>
<feature type="binding site" evidence="1">
    <location>
        <begin position="43"/>
        <end position="50"/>
    </location>
    <ligand>
        <name>ATP</name>
        <dbReference type="ChEBI" id="CHEBI:30616"/>
    </ligand>
</feature>
<accession>Q3ATT8</accession>
<gene>
    <name evidence="1" type="primary">uvrB</name>
    <name type="ordered locus">Cag_0314</name>
</gene>
<dbReference type="EMBL" id="CP000108">
    <property type="protein sequence ID" value="ABB27587.1"/>
    <property type="molecule type" value="Genomic_DNA"/>
</dbReference>
<dbReference type="SMR" id="Q3ATT8"/>
<dbReference type="STRING" id="340177.Cag_0314"/>
<dbReference type="KEGG" id="cch:Cag_0314"/>
<dbReference type="eggNOG" id="COG0556">
    <property type="taxonomic scope" value="Bacteria"/>
</dbReference>
<dbReference type="HOGENOM" id="CLU_009621_2_1_10"/>
<dbReference type="OrthoDB" id="9806651at2"/>
<dbReference type="GO" id="GO:0005737">
    <property type="term" value="C:cytoplasm"/>
    <property type="evidence" value="ECO:0007669"/>
    <property type="project" value="UniProtKB-SubCell"/>
</dbReference>
<dbReference type="GO" id="GO:0009380">
    <property type="term" value="C:excinuclease repair complex"/>
    <property type="evidence" value="ECO:0007669"/>
    <property type="project" value="InterPro"/>
</dbReference>
<dbReference type="GO" id="GO:0005524">
    <property type="term" value="F:ATP binding"/>
    <property type="evidence" value="ECO:0007669"/>
    <property type="project" value="UniProtKB-UniRule"/>
</dbReference>
<dbReference type="GO" id="GO:0016887">
    <property type="term" value="F:ATP hydrolysis activity"/>
    <property type="evidence" value="ECO:0007669"/>
    <property type="project" value="InterPro"/>
</dbReference>
<dbReference type="GO" id="GO:0003677">
    <property type="term" value="F:DNA binding"/>
    <property type="evidence" value="ECO:0007669"/>
    <property type="project" value="UniProtKB-UniRule"/>
</dbReference>
<dbReference type="GO" id="GO:0009381">
    <property type="term" value="F:excinuclease ABC activity"/>
    <property type="evidence" value="ECO:0007669"/>
    <property type="project" value="UniProtKB-UniRule"/>
</dbReference>
<dbReference type="GO" id="GO:0006289">
    <property type="term" value="P:nucleotide-excision repair"/>
    <property type="evidence" value="ECO:0007669"/>
    <property type="project" value="UniProtKB-UniRule"/>
</dbReference>
<dbReference type="GO" id="GO:0009432">
    <property type="term" value="P:SOS response"/>
    <property type="evidence" value="ECO:0007669"/>
    <property type="project" value="UniProtKB-UniRule"/>
</dbReference>
<dbReference type="CDD" id="cd17916">
    <property type="entry name" value="DEXHc_UvrB"/>
    <property type="match status" value="1"/>
</dbReference>
<dbReference type="CDD" id="cd18790">
    <property type="entry name" value="SF2_C_UvrB"/>
    <property type="match status" value="1"/>
</dbReference>
<dbReference type="Gene3D" id="3.40.50.300">
    <property type="entry name" value="P-loop containing nucleotide triphosphate hydrolases"/>
    <property type="match status" value="3"/>
</dbReference>
<dbReference type="Gene3D" id="4.10.860.10">
    <property type="entry name" value="UVR domain"/>
    <property type="match status" value="1"/>
</dbReference>
<dbReference type="HAMAP" id="MF_00204">
    <property type="entry name" value="UvrB"/>
    <property type="match status" value="1"/>
</dbReference>
<dbReference type="InterPro" id="IPR006935">
    <property type="entry name" value="Helicase/UvrB_N"/>
</dbReference>
<dbReference type="InterPro" id="IPR014001">
    <property type="entry name" value="Helicase_ATP-bd"/>
</dbReference>
<dbReference type="InterPro" id="IPR001650">
    <property type="entry name" value="Helicase_C-like"/>
</dbReference>
<dbReference type="InterPro" id="IPR027417">
    <property type="entry name" value="P-loop_NTPase"/>
</dbReference>
<dbReference type="InterPro" id="IPR001943">
    <property type="entry name" value="UVR_dom"/>
</dbReference>
<dbReference type="InterPro" id="IPR036876">
    <property type="entry name" value="UVR_dom_sf"/>
</dbReference>
<dbReference type="InterPro" id="IPR004807">
    <property type="entry name" value="UvrB"/>
</dbReference>
<dbReference type="InterPro" id="IPR041471">
    <property type="entry name" value="UvrB_inter"/>
</dbReference>
<dbReference type="InterPro" id="IPR024759">
    <property type="entry name" value="UvrB_YAD/RRR_dom"/>
</dbReference>
<dbReference type="NCBIfam" id="NF003673">
    <property type="entry name" value="PRK05298.1"/>
    <property type="match status" value="1"/>
</dbReference>
<dbReference type="NCBIfam" id="TIGR00631">
    <property type="entry name" value="uvrb"/>
    <property type="match status" value="1"/>
</dbReference>
<dbReference type="PANTHER" id="PTHR24029">
    <property type="entry name" value="UVRABC SYSTEM PROTEIN B"/>
    <property type="match status" value="1"/>
</dbReference>
<dbReference type="PANTHER" id="PTHR24029:SF0">
    <property type="entry name" value="UVRABC SYSTEM PROTEIN B"/>
    <property type="match status" value="1"/>
</dbReference>
<dbReference type="Pfam" id="PF00271">
    <property type="entry name" value="Helicase_C"/>
    <property type="match status" value="1"/>
</dbReference>
<dbReference type="Pfam" id="PF04851">
    <property type="entry name" value="ResIII"/>
    <property type="match status" value="1"/>
</dbReference>
<dbReference type="Pfam" id="PF02151">
    <property type="entry name" value="UVR"/>
    <property type="match status" value="1"/>
</dbReference>
<dbReference type="Pfam" id="PF12344">
    <property type="entry name" value="UvrB"/>
    <property type="match status" value="1"/>
</dbReference>
<dbReference type="Pfam" id="PF17757">
    <property type="entry name" value="UvrB_inter"/>
    <property type="match status" value="1"/>
</dbReference>
<dbReference type="SMART" id="SM00487">
    <property type="entry name" value="DEXDc"/>
    <property type="match status" value="1"/>
</dbReference>
<dbReference type="SMART" id="SM00490">
    <property type="entry name" value="HELICc"/>
    <property type="match status" value="1"/>
</dbReference>
<dbReference type="SUPFAM" id="SSF46600">
    <property type="entry name" value="C-terminal UvrC-binding domain of UvrB"/>
    <property type="match status" value="1"/>
</dbReference>
<dbReference type="SUPFAM" id="SSF52540">
    <property type="entry name" value="P-loop containing nucleoside triphosphate hydrolases"/>
    <property type="match status" value="2"/>
</dbReference>
<dbReference type="PROSITE" id="PS51192">
    <property type="entry name" value="HELICASE_ATP_BIND_1"/>
    <property type="match status" value="1"/>
</dbReference>
<dbReference type="PROSITE" id="PS51194">
    <property type="entry name" value="HELICASE_CTER"/>
    <property type="match status" value="1"/>
</dbReference>
<dbReference type="PROSITE" id="PS50151">
    <property type="entry name" value="UVR"/>
    <property type="match status" value="1"/>
</dbReference>
<organism>
    <name type="scientific">Chlorobium chlorochromatii (strain CaD3)</name>
    <dbReference type="NCBI Taxonomy" id="340177"/>
    <lineage>
        <taxon>Bacteria</taxon>
        <taxon>Pseudomonadati</taxon>
        <taxon>Chlorobiota</taxon>
        <taxon>Chlorobiia</taxon>
        <taxon>Chlorobiales</taxon>
        <taxon>Chlorobiaceae</taxon>
        <taxon>Chlorobium/Pelodictyon group</taxon>
        <taxon>Chlorobium</taxon>
    </lineage>
</organism>
<comment type="function">
    <text evidence="1">The UvrABC repair system catalyzes the recognition and processing of DNA lesions. A damage recognition complex composed of 2 UvrA and 2 UvrB subunits scans DNA for abnormalities. Upon binding of the UvrA(2)B(2) complex to a putative damaged site, the DNA wraps around one UvrB monomer. DNA wrap is dependent on ATP binding by UvrB and probably causes local melting of the DNA helix, facilitating insertion of UvrB beta-hairpin between the DNA strands. Then UvrB probes one DNA strand for the presence of a lesion. If a lesion is found the UvrA subunits dissociate and the UvrB-DNA preincision complex is formed. This complex is subsequently bound by UvrC and the second UvrB is released. If no lesion is found, the DNA wraps around the other UvrB subunit that will check the other stand for damage.</text>
</comment>
<comment type="subunit">
    <text evidence="1">Forms a heterotetramer with UvrA during the search for lesions. Interacts with UvrC in an incision complex.</text>
</comment>
<comment type="subcellular location">
    <subcellularLocation>
        <location evidence="1">Cytoplasm</location>
    </subcellularLocation>
</comment>
<comment type="domain">
    <text evidence="1">The beta-hairpin motif is involved in DNA binding.</text>
</comment>
<comment type="similarity">
    <text evidence="1">Belongs to the UvrB family.</text>
</comment>
<evidence type="ECO:0000255" key="1">
    <source>
        <dbReference type="HAMAP-Rule" id="MF_00204"/>
    </source>
</evidence>
<name>UVRB_CHLCH</name>
<reference key="1">
    <citation type="submission" date="2005-08" db="EMBL/GenBank/DDBJ databases">
        <title>Complete sequence of Chlorobium chlorochromatii CaD3.</title>
        <authorList>
            <consortium name="US DOE Joint Genome Institute"/>
            <person name="Copeland A."/>
            <person name="Lucas S."/>
            <person name="Lapidus A."/>
            <person name="Barry K."/>
            <person name="Detter J.C."/>
            <person name="Glavina T."/>
            <person name="Hammon N."/>
            <person name="Israni S."/>
            <person name="Pitluck S."/>
            <person name="Bryant D."/>
            <person name="Schmutz J."/>
            <person name="Larimer F."/>
            <person name="Land M."/>
            <person name="Kyrpides N."/>
            <person name="Ivanova N."/>
            <person name="Richardson P."/>
        </authorList>
    </citation>
    <scope>NUCLEOTIDE SEQUENCE [LARGE SCALE GENOMIC DNA]</scope>
    <source>
        <strain>CaD3</strain>
    </source>
</reference>
<keyword id="KW-0067">ATP-binding</keyword>
<keyword id="KW-0963">Cytoplasm</keyword>
<keyword id="KW-0227">DNA damage</keyword>
<keyword id="KW-0228">DNA excision</keyword>
<keyword id="KW-0234">DNA repair</keyword>
<keyword id="KW-0267">Excision nuclease</keyword>
<keyword id="KW-0547">Nucleotide-binding</keyword>
<keyword id="KW-0742">SOS response</keyword>
<proteinExistence type="inferred from homology"/>
<protein>
    <recommendedName>
        <fullName evidence="1">UvrABC system protein B</fullName>
        <shortName evidence="1">Protein UvrB</shortName>
    </recommendedName>
    <alternativeName>
        <fullName evidence="1">Excinuclease ABC subunit B</fullName>
    </alternativeName>
</protein>